<organism>
    <name type="scientific">Shewanella halifaxensis (strain HAW-EB4)</name>
    <dbReference type="NCBI Taxonomy" id="458817"/>
    <lineage>
        <taxon>Bacteria</taxon>
        <taxon>Pseudomonadati</taxon>
        <taxon>Pseudomonadota</taxon>
        <taxon>Gammaproteobacteria</taxon>
        <taxon>Alteromonadales</taxon>
        <taxon>Shewanellaceae</taxon>
        <taxon>Shewanella</taxon>
    </lineage>
</organism>
<sequence length="420" mass="44720">MDKLKIEASGALAGNVVISGAKNAALPILMAGVLAETDFNVSNVPNLRDVNTSCELLRCLGAEVTRSGTDKVCISTTNLNEFCAPYELVKTMRASILILGPLLARYGTADVSLPGGCAIGARPVNLHLQGLEQMGAKIEVKEGYIKARVDGRLKGAHIFMDMISVGATENLLMAAALADGETIIENAAREPEVVDLANCLIAMGAKIEGAGTDTVRIQGVESLQGCDYQVMPDRIETGSFLVAAAVTRGKIRCTKADPKTLESVLAKLEDAGASITTGDDWIELDMQGKRPKAVNIKTVAYPGFPTDMQAQFCVLNALAEGTATITETIFENRFMHVPELSRMGATMELEGNTCIIHGIEKLNGAQVMATDLRASASLVIAGLVAEGTTIVDRIYHLDRGYEHIEDKFKGLGGHVERVKS</sequence>
<evidence type="ECO:0000255" key="1">
    <source>
        <dbReference type="HAMAP-Rule" id="MF_00111"/>
    </source>
</evidence>
<feature type="chain" id="PRO_1000075983" description="UDP-N-acetylglucosamine 1-carboxyvinyltransferase">
    <location>
        <begin position="1"/>
        <end position="420"/>
    </location>
</feature>
<feature type="active site" description="Proton donor" evidence="1">
    <location>
        <position position="117"/>
    </location>
</feature>
<feature type="binding site" evidence="1">
    <location>
        <begin position="22"/>
        <end position="23"/>
    </location>
    <ligand>
        <name>phosphoenolpyruvate</name>
        <dbReference type="ChEBI" id="CHEBI:58702"/>
    </ligand>
</feature>
<feature type="binding site" evidence="1">
    <location>
        <position position="93"/>
    </location>
    <ligand>
        <name>UDP-N-acetyl-alpha-D-glucosamine</name>
        <dbReference type="ChEBI" id="CHEBI:57705"/>
    </ligand>
</feature>
<feature type="binding site" evidence="1">
    <location>
        <position position="307"/>
    </location>
    <ligand>
        <name>UDP-N-acetyl-alpha-D-glucosamine</name>
        <dbReference type="ChEBI" id="CHEBI:57705"/>
    </ligand>
</feature>
<feature type="binding site" evidence="1">
    <location>
        <position position="329"/>
    </location>
    <ligand>
        <name>UDP-N-acetyl-alpha-D-glucosamine</name>
        <dbReference type="ChEBI" id="CHEBI:57705"/>
    </ligand>
</feature>
<feature type="modified residue" description="2-(S-cysteinyl)pyruvic acid O-phosphothioketal" evidence="1">
    <location>
        <position position="117"/>
    </location>
</feature>
<protein>
    <recommendedName>
        <fullName evidence="1">UDP-N-acetylglucosamine 1-carboxyvinyltransferase</fullName>
        <ecNumber evidence="1">2.5.1.7</ecNumber>
    </recommendedName>
    <alternativeName>
        <fullName evidence="1">Enoylpyruvate transferase</fullName>
    </alternativeName>
    <alternativeName>
        <fullName evidence="1">UDP-N-acetylglucosamine enolpyruvyl transferase</fullName>
        <shortName evidence="1">EPT</shortName>
    </alternativeName>
</protein>
<reference key="1">
    <citation type="submission" date="2008-01" db="EMBL/GenBank/DDBJ databases">
        <title>Complete sequence of Shewanella halifaxensis HAW-EB4.</title>
        <authorList>
            <consortium name="US DOE Joint Genome Institute"/>
            <person name="Copeland A."/>
            <person name="Lucas S."/>
            <person name="Lapidus A."/>
            <person name="Glavina del Rio T."/>
            <person name="Dalin E."/>
            <person name="Tice H."/>
            <person name="Bruce D."/>
            <person name="Goodwin L."/>
            <person name="Pitluck S."/>
            <person name="Sims D."/>
            <person name="Brettin T."/>
            <person name="Detter J.C."/>
            <person name="Han C."/>
            <person name="Kuske C.R."/>
            <person name="Schmutz J."/>
            <person name="Larimer F."/>
            <person name="Land M."/>
            <person name="Hauser L."/>
            <person name="Kyrpides N."/>
            <person name="Kim E."/>
            <person name="Zhao J.-S."/>
            <person name="Richardson P."/>
        </authorList>
    </citation>
    <scope>NUCLEOTIDE SEQUENCE [LARGE SCALE GENOMIC DNA]</scope>
    <source>
        <strain>HAW-EB4</strain>
    </source>
</reference>
<accession>B0TUW5</accession>
<proteinExistence type="inferred from homology"/>
<dbReference type="EC" id="2.5.1.7" evidence="1"/>
<dbReference type="EMBL" id="CP000931">
    <property type="protein sequence ID" value="ABZ78232.1"/>
    <property type="molecule type" value="Genomic_DNA"/>
</dbReference>
<dbReference type="RefSeq" id="WP_012278750.1">
    <property type="nucleotide sequence ID" value="NC_010334.1"/>
</dbReference>
<dbReference type="SMR" id="B0TUW5"/>
<dbReference type="STRING" id="458817.Shal_3692"/>
<dbReference type="KEGG" id="shl:Shal_3692"/>
<dbReference type="eggNOG" id="COG0766">
    <property type="taxonomic scope" value="Bacteria"/>
</dbReference>
<dbReference type="HOGENOM" id="CLU_027387_0_0_6"/>
<dbReference type="OrthoDB" id="9803760at2"/>
<dbReference type="UniPathway" id="UPA00219"/>
<dbReference type="Proteomes" id="UP000001317">
    <property type="component" value="Chromosome"/>
</dbReference>
<dbReference type="GO" id="GO:0005737">
    <property type="term" value="C:cytoplasm"/>
    <property type="evidence" value="ECO:0007669"/>
    <property type="project" value="UniProtKB-SubCell"/>
</dbReference>
<dbReference type="GO" id="GO:0008760">
    <property type="term" value="F:UDP-N-acetylglucosamine 1-carboxyvinyltransferase activity"/>
    <property type="evidence" value="ECO:0007669"/>
    <property type="project" value="UniProtKB-UniRule"/>
</dbReference>
<dbReference type="GO" id="GO:0051301">
    <property type="term" value="P:cell division"/>
    <property type="evidence" value="ECO:0007669"/>
    <property type="project" value="UniProtKB-KW"/>
</dbReference>
<dbReference type="GO" id="GO:0071555">
    <property type="term" value="P:cell wall organization"/>
    <property type="evidence" value="ECO:0007669"/>
    <property type="project" value="UniProtKB-KW"/>
</dbReference>
<dbReference type="GO" id="GO:0009252">
    <property type="term" value="P:peptidoglycan biosynthetic process"/>
    <property type="evidence" value="ECO:0007669"/>
    <property type="project" value="UniProtKB-UniRule"/>
</dbReference>
<dbReference type="GO" id="GO:0008360">
    <property type="term" value="P:regulation of cell shape"/>
    <property type="evidence" value="ECO:0007669"/>
    <property type="project" value="UniProtKB-KW"/>
</dbReference>
<dbReference type="GO" id="GO:0019277">
    <property type="term" value="P:UDP-N-acetylgalactosamine biosynthetic process"/>
    <property type="evidence" value="ECO:0007669"/>
    <property type="project" value="InterPro"/>
</dbReference>
<dbReference type="CDD" id="cd01555">
    <property type="entry name" value="UdpNAET"/>
    <property type="match status" value="1"/>
</dbReference>
<dbReference type="FunFam" id="3.65.10.10:FF:000002">
    <property type="entry name" value="UDP-N-acetylglucosamine 1-carboxyvinyltransferase"/>
    <property type="match status" value="1"/>
</dbReference>
<dbReference type="Gene3D" id="3.65.10.10">
    <property type="entry name" value="Enolpyruvate transferase domain"/>
    <property type="match status" value="2"/>
</dbReference>
<dbReference type="HAMAP" id="MF_00111">
    <property type="entry name" value="MurA"/>
    <property type="match status" value="1"/>
</dbReference>
<dbReference type="InterPro" id="IPR001986">
    <property type="entry name" value="Enolpyruvate_Tfrase_dom"/>
</dbReference>
<dbReference type="InterPro" id="IPR036968">
    <property type="entry name" value="Enolpyruvate_Tfrase_sf"/>
</dbReference>
<dbReference type="InterPro" id="IPR050068">
    <property type="entry name" value="MurA_subfamily"/>
</dbReference>
<dbReference type="InterPro" id="IPR013792">
    <property type="entry name" value="RNA3'P_cycl/enolpyr_Trfase_a/b"/>
</dbReference>
<dbReference type="InterPro" id="IPR005750">
    <property type="entry name" value="UDP_GlcNAc_COvinyl_MurA"/>
</dbReference>
<dbReference type="NCBIfam" id="TIGR01072">
    <property type="entry name" value="murA"/>
    <property type="match status" value="1"/>
</dbReference>
<dbReference type="NCBIfam" id="NF006873">
    <property type="entry name" value="PRK09369.1"/>
    <property type="match status" value="1"/>
</dbReference>
<dbReference type="PANTHER" id="PTHR43783">
    <property type="entry name" value="UDP-N-ACETYLGLUCOSAMINE 1-CARBOXYVINYLTRANSFERASE"/>
    <property type="match status" value="1"/>
</dbReference>
<dbReference type="PANTHER" id="PTHR43783:SF1">
    <property type="entry name" value="UDP-N-ACETYLGLUCOSAMINE 1-CARBOXYVINYLTRANSFERASE"/>
    <property type="match status" value="1"/>
</dbReference>
<dbReference type="Pfam" id="PF00275">
    <property type="entry name" value="EPSP_synthase"/>
    <property type="match status" value="1"/>
</dbReference>
<dbReference type="SUPFAM" id="SSF55205">
    <property type="entry name" value="EPT/RTPC-like"/>
    <property type="match status" value="1"/>
</dbReference>
<name>MURA_SHEHH</name>
<keyword id="KW-0131">Cell cycle</keyword>
<keyword id="KW-0132">Cell division</keyword>
<keyword id="KW-0133">Cell shape</keyword>
<keyword id="KW-0961">Cell wall biogenesis/degradation</keyword>
<keyword id="KW-0963">Cytoplasm</keyword>
<keyword id="KW-0573">Peptidoglycan synthesis</keyword>
<keyword id="KW-0670">Pyruvate</keyword>
<keyword id="KW-0808">Transferase</keyword>
<comment type="function">
    <text evidence="1">Cell wall formation. Adds enolpyruvyl to UDP-N-acetylglucosamine.</text>
</comment>
<comment type="catalytic activity">
    <reaction evidence="1">
        <text>phosphoenolpyruvate + UDP-N-acetyl-alpha-D-glucosamine = UDP-N-acetyl-3-O-(1-carboxyvinyl)-alpha-D-glucosamine + phosphate</text>
        <dbReference type="Rhea" id="RHEA:18681"/>
        <dbReference type="ChEBI" id="CHEBI:43474"/>
        <dbReference type="ChEBI" id="CHEBI:57705"/>
        <dbReference type="ChEBI" id="CHEBI:58702"/>
        <dbReference type="ChEBI" id="CHEBI:68483"/>
        <dbReference type="EC" id="2.5.1.7"/>
    </reaction>
</comment>
<comment type="pathway">
    <text evidence="1">Cell wall biogenesis; peptidoglycan biosynthesis.</text>
</comment>
<comment type="subcellular location">
    <subcellularLocation>
        <location evidence="1">Cytoplasm</location>
    </subcellularLocation>
</comment>
<comment type="similarity">
    <text evidence="1">Belongs to the EPSP synthase family. MurA subfamily.</text>
</comment>
<gene>
    <name evidence="1" type="primary">murA</name>
    <name type="ordered locus">Shal_3692</name>
</gene>